<name>EIF3K_PYRO3</name>
<dbReference type="EMBL" id="AY850350">
    <property type="protein sequence ID" value="AAW69356.1"/>
    <property type="molecule type" value="mRNA"/>
</dbReference>
<dbReference type="EMBL" id="JH793132">
    <property type="protein sequence ID" value="ELQ39667.1"/>
    <property type="molecule type" value="Genomic_DNA"/>
</dbReference>
<dbReference type="SMR" id="L7IAU0"/>
<dbReference type="OrthoDB" id="641743at147550"/>
<dbReference type="Proteomes" id="UP000011086">
    <property type="component" value="Unassembled WGS sequence"/>
</dbReference>
<dbReference type="GO" id="GO:0016282">
    <property type="term" value="C:eukaryotic 43S preinitiation complex"/>
    <property type="evidence" value="ECO:0007669"/>
    <property type="project" value="UniProtKB-UniRule"/>
</dbReference>
<dbReference type="GO" id="GO:0033290">
    <property type="term" value="C:eukaryotic 48S preinitiation complex"/>
    <property type="evidence" value="ECO:0007669"/>
    <property type="project" value="UniProtKB-UniRule"/>
</dbReference>
<dbReference type="GO" id="GO:0005852">
    <property type="term" value="C:eukaryotic translation initiation factor 3 complex"/>
    <property type="evidence" value="ECO:0007669"/>
    <property type="project" value="UniProtKB-UniRule"/>
</dbReference>
<dbReference type="GO" id="GO:0043022">
    <property type="term" value="F:ribosome binding"/>
    <property type="evidence" value="ECO:0007669"/>
    <property type="project" value="InterPro"/>
</dbReference>
<dbReference type="GO" id="GO:0003723">
    <property type="term" value="F:RNA binding"/>
    <property type="evidence" value="ECO:0007669"/>
    <property type="project" value="UniProtKB-UniRule"/>
</dbReference>
<dbReference type="GO" id="GO:0003743">
    <property type="term" value="F:translation initiation factor activity"/>
    <property type="evidence" value="ECO:0007669"/>
    <property type="project" value="UniProtKB-UniRule"/>
</dbReference>
<dbReference type="GO" id="GO:0001732">
    <property type="term" value="P:formation of cytoplasmic translation initiation complex"/>
    <property type="evidence" value="ECO:0007669"/>
    <property type="project" value="UniProtKB-UniRule"/>
</dbReference>
<dbReference type="GO" id="GO:0006446">
    <property type="term" value="P:regulation of translational initiation"/>
    <property type="evidence" value="ECO:0007669"/>
    <property type="project" value="InterPro"/>
</dbReference>
<dbReference type="FunFam" id="1.10.10.10:FF:000389">
    <property type="entry name" value="Eukaryotic translation initiation factor 3 subunit K"/>
    <property type="match status" value="1"/>
</dbReference>
<dbReference type="Gene3D" id="1.25.40.250">
    <property type="entry name" value="ARM repeat, domain 1"/>
    <property type="match status" value="1"/>
</dbReference>
<dbReference type="Gene3D" id="1.10.10.10">
    <property type="entry name" value="Winged helix-like DNA-binding domain superfamily/Winged helix DNA-binding domain"/>
    <property type="match status" value="1"/>
</dbReference>
<dbReference type="HAMAP" id="MF_03010">
    <property type="entry name" value="eIF3k"/>
    <property type="match status" value="1"/>
</dbReference>
<dbReference type="InterPro" id="IPR016024">
    <property type="entry name" value="ARM-type_fold"/>
</dbReference>
<dbReference type="InterPro" id="IPR033464">
    <property type="entry name" value="CSN8_PSD8_EIF3K"/>
</dbReference>
<dbReference type="InterPro" id="IPR009374">
    <property type="entry name" value="eIF3k"/>
</dbReference>
<dbReference type="InterPro" id="IPR000717">
    <property type="entry name" value="PCI_dom"/>
</dbReference>
<dbReference type="InterPro" id="IPR016020">
    <property type="entry name" value="Transl_init_fac_sub12_N_euk"/>
</dbReference>
<dbReference type="InterPro" id="IPR036388">
    <property type="entry name" value="WH-like_DNA-bd_sf"/>
</dbReference>
<dbReference type="InterPro" id="IPR036390">
    <property type="entry name" value="WH_DNA-bd_sf"/>
</dbReference>
<dbReference type="PANTHER" id="PTHR13022">
    <property type="entry name" value="EUKARYOTIC TRANSLATION INITIATION FACTOR 3 SUBUNIT 11"/>
    <property type="match status" value="1"/>
</dbReference>
<dbReference type="PANTHER" id="PTHR13022:SF0">
    <property type="entry name" value="EUKARYOTIC TRANSLATION INITIATION FACTOR 3 SUBUNIT K"/>
    <property type="match status" value="1"/>
</dbReference>
<dbReference type="Pfam" id="PF10075">
    <property type="entry name" value="CSN8_PSD8_EIF3K"/>
    <property type="match status" value="1"/>
</dbReference>
<dbReference type="SUPFAM" id="SSF48371">
    <property type="entry name" value="ARM repeat"/>
    <property type="match status" value="1"/>
</dbReference>
<dbReference type="SUPFAM" id="SSF46785">
    <property type="entry name" value="Winged helix' DNA-binding domain"/>
    <property type="match status" value="1"/>
</dbReference>
<dbReference type="PROSITE" id="PS50250">
    <property type="entry name" value="PCI"/>
    <property type="match status" value="1"/>
</dbReference>
<reference key="1">
    <citation type="submission" date="2004-12" db="EMBL/GenBank/DDBJ databases">
        <authorList>
            <person name="Chen B.S."/>
            <person name="Li Y.Z."/>
            <person name="Peng Y.L."/>
            <person name="Dong H.T."/>
            <person name="Li D.B."/>
        </authorList>
    </citation>
    <scope>NUCLEOTIDE SEQUENCE [MRNA]</scope>
    <source>
        <strain>Y34</strain>
        <tissue>Conidium</tissue>
    </source>
</reference>
<reference key="2">
    <citation type="journal article" date="2012" name="PLoS Genet.">
        <title>Comparative analysis of the genomes of two field isolates of the rice blast fungus Magnaporthe oryzae.</title>
        <authorList>
            <person name="Xue M."/>
            <person name="Yang J."/>
            <person name="Li Z."/>
            <person name="Hu S."/>
            <person name="Yao N."/>
            <person name="Dean R.A."/>
            <person name="Zhao W."/>
            <person name="Shen M."/>
            <person name="Zhang H."/>
            <person name="Li C."/>
            <person name="Liu L."/>
            <person name="Cao L."/>
            <person name="Xu X."/>
            <person name="Xing Y."/>
            <person name="Hsiang T."/>
            <person name="Zhang Z."/>
            <person name="Xu J.-R."/>
            <person name="Peng Y.-L."/>
        </authorList>
    </citation>
    <scope>NUCLEOTIDE SEQUENCE [LARGE SCALE GENOMIC DNA]</scope>
    <source>
        <strain>Y34</strain>
    </source>
</reference>
<accession>L7IAU0</accession>
<accession>G4NHF9</accession>
<accession>Q5G574</accession>
<comment type="function">
    <text evidence="1">Component of the eukaryotic translation initiation factor 3 (eIF-3) complex, which is involved in protein synthesis of a specialized repertoire of mRNAs and, together with other initiation factors, stimulates binding of mRNA and methionyl-tRNAi to the 40S ribosome. The eIF-3 complex specifically targets and initiates translation of a subset of mRNAs involved in cell proliferation.</text>
</comment>
<comment type="subcellular location">
    <subcellularLocation>
        <location evidence="1">Cytoplasm</location>
    </subcellularLocation>
</comment>
<comment type="similarity">
    <text evidence="1">Belongs to the eIF-3 subunit K family.</text>
</comment>
<protein>
    <recommendedName>
        <fullName evidence="1">Eukaryotic translation initiation factor 3 subunit K</fullName>
        <shortName evidence="1">eIF3k</shortName>
    </recommendedName>
    <alternativeName>
        <fullName evidence="1">eIF-3 p25</fullName>
    </alternativeName>
</protein>
<organism>
    <name type="scientific">Pyricularia oryzae (strain Y34)</name>
    <name type="common">Rice blast fungus</name>
    <name type="synonym">Magnaporthe oryzae</name>
    <dbReference type="NCBI Taxonomy" id="1143189"/>
    <lineage>
        <taxon>Eukaryota</taxon>
        <taxon>Fungi</taxon>
        <taxon>Dikarya</taxon>
        <taxon>Ascomycota</taxon>
        <taxon>Pezizomycotina</taxon>
        <taxon>Sordariomycetes</taxon>
        <taxon>Sordariomycetidae</taxon>
        <taxon>Magnaporthales</taxon>
        <taxon>Pyriculariaceae</taxon>
        <taxon>Pyricularia</taxon>
    </lineage>
</organism>
<feature type="chain" id="PRO_0000423540" description="Eukaryotic translation initiation factor 3 subunit K">
    <location>
        <begin position="1"/>
        <end position="236"/>
    </location>
</feature>
<feature type="domain" description="PCI" evidence="2">
    <location>
        <begin position="48"/>
        <end position="218"/>
    </location>
</feature>
<evidence type="ECO:0000255" key="1">
    <source>
        <dbReference type="HAMAP-Rule" id="MF_03010"/>
    </source>
</evidence>
<evidence type="ECO:0000255" key="2">
    <source>
        <dbReference type="PROSITE-ProRule" id="PRU01185"/>
    </source>
</evidence>
<proteinExistence type="evidence at transcript level"/>
<gene>
    <name type="ORF">OOU_Y34scaffold00487g12</name>
</gene>
<keyword id="KW-0963">Cytoplasm</keyword>
<keyword id="KW-0396">Initiation factor</keyword>
<keyword id="KW-0648">Protein biosynthesis</keyword>
<sequence length="236" mass="26967">MPRLPNSEDPPERPDFITNIINGLERYNPEAVGTLEQYLTTQCEERFCDCNANRTLLKLYQLNPDRIKDEVITNILVKAMTLFPSPQFSQALHLLSPSALSQQSELSEAVSKLRALNNQLEGAQYARFWATIESDDLYADLTTDIQGFEEMVRLRIAVLVSQAFREVQLSLMEQWLGLDEAPLKTFITEACGFKIEGDIVQIPKNPDNEAKKAEIREDVNVEMFSRVIRRAWEEVA</sequence>